<accession>P36937</accession>
<accession>Q2EEQ9</accession>
<comment type="function">
    <text evidence="1 4">Part of the high-affinity ATP-driven potassium transport (or Kdp) system, which catalyzes the hydrolysis of ATP coupled with the electrogenic transport of potassium into the cytoplasm (PubMed:23930894). This subunit may be involved in stabilization of the complex (PubMed:10608856).</text>
</comment>
<comment type="subunit">
    <text evidence="1 3 5 6">The system is composed of three essential subunits: KdpA, KdpB and KdpC (PubMed:10608856, PubMed:28636601, PubMed:30478378). The complex also contains KdpF, a small non-essential subunit (PubMed:10608856, PubMed:28636601, PubMed:30478378). The KdpFABC complex exists as a dimer above concentrations of 30-50 nM, whereas the complex exists as a functional monomer at lower concentrations (PubMed:18298081).</text>
</comment>
<comment type="subcellular location">
    <subcellularLocation>
        <location evidence="5 6 8">Cell inner membrane</location>
        <topology evidence="5 6">Single-pass membrane protein</topology>
    </subcellularLocation>
</comment>
<comment type="induction">
    <text evidence="2">Transcriptionally regulated by the KdpD/KdpE two-component regulatory system.</text>
</comment>
<comment type="disruption phenotype">
    <text evidence="1">Inactivation of kdpF still leads to a functional KdpABC complex in vivo. Deletion impairs ATPase activity of the complex in vitro.</text>
</comment>
<comment type="similarity">
    <text evidence="7">Belongs to the KdpF family.</text>
</comment>
<name>KDPF_ECOLI</name>
<gene>
    <name type="primary">kdpF</name>
    <name type="ordered locus">b4513</name>
    <name type="ordered locus">JW0687</name>
</gene>
<proteinExistence type="evidence at protein level"/>
<sequence length="29" mass="3072">MSAGVITGVLLVFLLLGYLVYALINAEAF</sequence>
<protein>
    <recommendedName>
        <fullName evidence="7">Potassium-transporting ATPase KdpF subunit</fullName>
    </recommendedName>
    <alternativeName>
        <fullName evidence="7">ATP phosphohydrolase [potassium-transporting] F chain</fullName>
    </alternativeName>
    <alternativeName>
        <fullName evidence="7">Potassium-binding and translocating subunit F</fullName>
    </alternativeName>
    <alternativeName>
        <fullName evidence="7">Potassium-translocating ATPase F chain</fullName>
    </alternativeName>
</protein>
<reference key="1">
    <citation type="journal article" date="1984" name="Proc. Natl. Acad. Sci. U.S.A.">
        <title>Sequence homology between two membrane transport ATPases, the Kdp-ATPase of Escherichia coli and the Ca2+-ATPase of sarcoplasmic reticulum.</title>
        <authorList>
            <person name="Hesse J.E."/>
            <person name="Wieczorek L."/>
            <person name="Altendorf K."/>
            <person name="Reicin A.S."/>
            <person name="Dorus E."/>
            <person name="Epstein W."/>
        </authorList>
    </citation>
    <scope>NUCLEOTIDE SEQUENCE [GENOMIC DNA]</scope>
</reference>
<reference key="2">
    <citation type="journal article" date="1996" name="DNA Res.">
        <title>A 718-kb DNA sequence of the Escherichia coli K-12 genome corresponding to the 12.7-28.0 min region on the linkage map.</title>
        <authorList>
            <person name="Oshima T."/>
            <person name="Aiba H."/>
            <person name="Baba T."/>
            <person name="Fujita K."/>
            <person name="Hayashi K."/>
            <person name="Honjo A."/>
            <person name="Ikemoto K."/>
            <person name="Inada T."/>
            <person name="Itoh T."/>
            <person name="Kajihara M."/>
            <person name="Kanai K."/>
            <person name="Kashimoto K."/>
            <person name="Kimura S."/>
            <person name="Kitagawa M."/>
            <person name="Makino K."/>
            <person name="Masuda S."/>
            <person name="Miki T."/>
            <person name="Mizobuchi K."/>
            <person name="Mori H."/>
            <person name="Motomura K."/>
            <person name="Nakamura Y."/>
            <person name="Nashimoto H."/>
            <person name="Nishio Y."/>
            <person name="Saito N."/>
            <person name="Sampei G."/>
            <person name="Seki Y."/>
            <person name="Tagami H."/>
            <person name="Takemoto K."/>
            <person name="Wada C."/>
            <person name="Yamamoto Y."/>
            <person name="Yano M."/>
            <person name="Horiuchi T."/>
        </authorList>
    </citation>
    <scope>NUCLEOTIDE SEQUENCE [LARGE SCALE GENOMIC DNA]</scope>
    <source>
        <strain>K12 / W3110 / ATCC 27325 / DSM 5911</strain>
    </source>
</reference>
<reference key="3">
    <citation type="journal article" date="1997" name="Science">
        <title>The complete genome sequence of Escherichia coli K-12.</title>
        <authorList>
            <person name="Blattner F.R."/>
            <person name="Plunkett G. III"/>
            <person name="Bloch C.A."/>
            <person name="Perna N.T."/>
            <person name="Burland V."/>
            <person name="Riley M."/>
            <person name="Collado-Vides J."/>
            <person name="Glasner J.D."/>
            <person name="Rode C.K."/>
            <person name="Mayhew G.F."/>
            <person name="Gregor J."/>
            <person name="Davis N.W."/>
            <person name="Kirkpatrick H.A."/>
            <person name="Goeden M.A."/>
            <person name="Rose D.J."/>
            <person name="Mau B."/>
            <person name="Shao Y."/>
        </authorList>
    </citation>
    <scope>NUCLEOTIDE SEQUENCE [LARGE SCALE GENOMIC DNA]</scope>
    <source>
        <strain>K12 / MG1655 / ATCC 47076</strain>
    </source>
</reference>
<reference key="4">
    <citation type="journal article" date="2006" name="Mol. Syst. Biol.">
        <title>Highly accurate genome sequences of Escherichia coli K-12 strains MG1655 and W3110.</title>
        <authorList>
            <person name="Hayashi K."/>
            <person name="Morooka N."/>
            <person name="Yamamoto Y."/>
            <person name="Fujita K."/>
            <person name="Isono K."/>
            <person name="Choi S."/>
            <person name="Ohtsubo E."/>
            <person name="Baba T."/>
            <person name="Wanner B.L."/>
            <person name="Mori H."/>
            <person name="Horiuchi T."/>
        </authorList>
    </citation>
    <scope>NUCLEOTIDE SEQUENCE [LARGE SCALE GENOMIC DNA]</scope>
    <source>
        <strain>K12 / W3110 / ATCC 27325 / DSM 5911</strain>
    </source>
</reference>
<reference key="5">
    <citation type="journal article" date="1992" name="Ann. N. Y. Acad. Sci.">
        <title>The KDP ATPase of Escherichia coli.</title>
        <authorList>
            <person name="Altendorf K."/>
            <person name="Siebers A."/>
            <person name="Epstein W."/>
        </authorList>
    </citation>
    <scope>IDENTIFICATION</scope>
</reference>
<reference key="6">
    <citation type="journal article" date="1992" name="J. Bacteriol.">
        <title>The products of the kdpDE operon are required for expression of the Kdp ATPase of Escherichia coli.</title>
        <authorList>
            <person name="Polarek J.W."/>
            <person name="Williams G."/>
            <person name="Epstein W."/>
        </authorList>
    </citation>
    <scope>INDUCTION</scope>
    <source>
        <strain>K12</strain>
    </source>
</reference>
<reference key="7">
    <citation type="journal article" date="1999" name="J. Biol. Chem.">
        <title>The KdpF subunit is part of the K(+)-translocating Kdp complex of Escherichia coli and is responsible for stabilization of the complex in vitro.</title>
        <authorList>
            <person name="Gassel M."/>
            <person name="Mollenkamp T."/>
            <person name="Puppe W."/>
            <person name="Altendorf K."/>
        </authorList>
    </citation>
    <scope>FUNCTION</scope>
    <scope>SUBUNIT</scope>
    <scope>SUBCELLULAR LOCATION</scope>
    <scope>DISRUPTION PHENOTYPE</scope>
    <source>
        <strain>K12</strain>
    </source>
</reference>
<reference key="8">
    <citation type="journal article" date="2008" name="Biochemistry">
        <title>K+-translocating KdpFABC P-type ATPase from Escherichia coli acts as a functional and structural dimer.</title>
        <authorList>
            <person name="Heitkamp T."/>
            <person name="Kalinowski R."/>
            <person name="Boettcher B."/>
            <person name="Boersch M."/>
            <person name="Altendorf K."/>
            <person name="Greie J.C."/>
        </authorList>
    </citation>
    <scope>SUBUNIT</scope>
</reference>
<reference key="9">
    <citation type="journal article" date="2013" name="Biochemistry">
        <title>Mechanistic analysis of the pump cycle of the KdpFABC P-type ATPase.</title>
        <authorList>
            <person name="Damnjanovic B."/>
            <person name="Weber A."/>
            <person name="Potschies M."/>
            <person name="Greie J.C."/>
            <person name="Apell H.J."/>
        </authorList>
    </citation>
    <scope>FUNCTION</scope>
</reference>
<reference evidence="9" key="10">
    <citation type="journal article" date="2017" name="Nature">
        <title>Crystal structure of the potassium-importing KdpFABC membrane complex.</title>
        <authorList>
            <person name="Huang C.S."/>
            <person name="Pedersen B.P."/>
            <person name="Stokes D.L."/>
        </authorList>
    </citation>
    <scope>X-RAY CRYSTALLOGRAPHY (2.90 ANGSTROMS) OF 1-27 IN COMPLEX WITH KDPA; KDPB AND KDPC</scope>
    <scope>SUBUNIT</scope>
    <scope>SUBCELLULAR LOCATION</scope>
    <scope>TOPOLOGY</scope>
</reference>
<reference evidence="10 11" key="11">
    <citation type="journal article" date="2018" name="Nat. Commun.">
        <title>Cryo-EM structures of KdpFABC suggest a K+ transport mechanism via two inter-subunit half-channels.</title>
        <authorList>
            <person name="Stock C."/>
            <person name="Hielkema L."/>
            <person name="Tascon I."/>
            <person name="Wunnicke D."/>
            <person name="Oostergetel G.T."/>
            <person name="Azkargorta M."/>
            <person name="Paulino C."/>
            <person name="Haenelt I."/>
        </authorList>
    </citation>
    <scope>STRUCTURE BY ELECTRON MICROSCOPY (3.70 ANGSTROMS) OF KDPFABC COMPLEX IN E1 AND E2 STATE</scope>
    <scope>SUBUNIT</scope>
    <scope>SUBCELLULAR LOCATION</scope>
    <scope>TOPOLOGY</scope>
</reference>
<reference evidence="12 13 14 15 16" key="12">
    <citation type="journal article" date="2021" name="Proc. Natl. Acad. Sci. U.S.A.">
        <title>Structural basis for potassium transport in prokaryotes by KdpFABC.</title>
        <authorList>
            <person name="Sweet M.E."/>
            <person name="Larsen C."/>
            <person name="Zhang X."/>
            <person name="Schlame M."/>
            <person name="Pedersen B.P."/>
            <person name="Stokes D.L."/>
        </authorList>
    </citation>
    <scope>STRUCTURE BY ELECTRON MICROSCOPY (2.90 ANGSTROMS) OF KDPFABC COMPLEX IN MAJOR ENZYMATIC STATES</scope>
</reference>
<keyword id="KW-0002">3D-structure</keyword>
<keyword id="KW-0997">Cell inner membrane</keyword>
<keyword id="KW-1003">Cell membrane</keyword>
<keyword id="KW-0406">Ion transport</keyword>
<keyword id="KW-0472">Membrane</keyword>
<keyword id="KW-0630">Potassium</keyword>
<keyword id="KW-0633">Potassium transport</keyword>
<keyword id="KW-1185">Reference proteome</keyword>
<keyword id="KW-0812">Transmembrane</keyword>
<keyword id="KW-1133">Transmembrane helix</keyword>
<keyword id="KW-0813">Transport</keyword>
<evidence type="ECO:0000269" key="1">
    <source>
    </source>
</evidence>
<evidence type="ECO:0000269" key="2">
    <source>
    </source>
</evidence>
<evidence type="ECO:0000269" key="3">
    <source>
    </source>
</evidence>
<evidence type="ECO:0000269" key="4">
    <source>
    </source>
</evidence>
<evidence type="ECO:0000269" key="5">
    <source>
    </source>
</evidence>
<evidence type="ECO:0000269" key="6">
    <source>
    </source>
</evidence>
<evidence type="ECO:0000305" key="7"/>
<evidence type="ECO:0000305" key="8">
    <source>
    </source>
</evidence>
<evidence type="ECO:0007744" key="9">
    <source>
        <dbReference type="PDB" id="5MRW"/>
    </source>
</evidence>
<evidence type="ECO:0007744" key="10">
    <source>
        <dbReference type="PDB" id="6HRA"/>
    </source>
</evidence>
<evidence type="ECO:0007744" key="11">
    <source>
        <dbReference type="PDB" id="6HRB"/>
    </source>
</evidence>
<evidence type="ECO:0007744" key="12">
    <source>
        <dbReference type="PDB" id="7BGY"/>
    </source>
</evidence>
<evidence type="ECO:0007744" key="13">
    <source>
        <dbReference type="PDB" id="7BH1"/>
    </source>
</evidence>
<evidence type="ECO:0007744" key="14">
    <source>
        <dbReference type="PDB" id="7BH2"/>
    </source>
</evidence>
<evidence type="ECO:0007744" key="15">
    <source>
        <dbReference type="PDB" id="7LC3"/>
    </source>
</evidence>
<evidence type="ECO:0007744" key="16">
    <source>
        <dbReference type="PDB" id="7LC6"/>
    </source>
</evidence>
<evidence type="ECO:0007829" key="17">
    <source>
        <dbReference type="PDB" id="5MRW"/>
    </source>
</evidence>
<evidence type="ECO:0007829" key="18">
    <source>
        <dbReference type="PDB" id="7BGY"/>
    </source>
</evidence>
<organism>
    <name type="scientific">Escherichia coli (strain K12)</name>
    <dbReference type="NCBI Taxonomy" id="83333"/>
    <lineage>
        <taxon>Bacteria</taxon>
        <taxon>Pseudomonadati</taxon>
        <taxon>Pseudomonadota</taxon>
        <taxon>Gammaproteobacteria</taxon>
        <taxon>Enterobacterales</taxon>
        <taxon>Enterobacteriaceae</taxon>
        <taxon>Escherichia</taxon>
    </lineage>
</organism>
<dbReference type="EMBL" id="K02670">
    <property type="status" value="NOT_ANNOTATED_CDS"/>
    <property type="molecule type" value="Genomic_DNA"/>
</dbReference>
<dbReference type="EMBL" id="U00096">
    <property type="protein sequence ID" value="ABD18643.1"/>
    <property type="molecule type" value="Genomic_DNA"/>
</dbReference>
<dbReference type="EMBL" id="AP009048">
    <property type="protein sequence ID" value="BAA35357.1"/>
    <property type="molecule type" value="Genomic_DNA"/>
</dbReference>
<dbReference type="PIR" id="T48910">
    <property type="entry name" value="T48910"/>
</dbReference>
<dbReference type="RefSeq" id="WP_001272653.1">
    <property type="nucleotide sequence ID" value="NZ_SSZK01000045.1"/>
</dbReference>
<dbReference type="RefSeq" id="YP_588443.1">
    <property type="nucleotide sequence ID" value="NC_000913.3"/>
</dbReference>
<dbReference type="PDB" id="5MRW">
    <property type="method" value="X-ray"/>
    <property type="resolution" value="2.90 A"/>
    <property type="chains" value="D/H/L=1-27"/>
</dbReference>
<dbReference type="PDB" id="6HRA">
    <property type="method" value="EM"/>
    <property type="resolution" value="3.70 A"/>
    <property type="chains" value="D=1-29"/>
</dbReference>
<dbReference type="PDB" id="6HRB">
    <property type="method" value="EM"/>
    <property type="resolution" value="4.00 A"/>
    <property type="chains" value="D=1-29"/>
</dbReference>
<dbReference type="PDB" id="7BGY">
    <property type="method" value="EM"/>
    <property type="resolution" value="2.90 A"/>
    <property type="chains" value="D=1-29"/>
</dbReference>
<dbReference type="PDB" id="7BH1">
    <property type="method" value="EM"/>
    <property type="resolution" value="3.38 A"/>
    <property type="chains" value="D=1-29"/>
</dbReference>
<dbReference type="PDB" id="7BH2">
    <property type="method" value="EM"/>
    <property type="resolution" value="3.00 A"/>
    <property type="chains" value="D=1-29"/>
</dbReference>
<dbReference type="PDB" id="7LC3">
    <property type="method" value="EM"/>
    <property type="resolution" value="3.23 A"/>
    <property type="chains" value="D=1-29"/>
</dbReference>
<dbReference type="PDB" id="7LC6">
    <property type="method" value="EM"/>
    <property type="resolution" value="3.70 A"/>
    <property type="chains" value="D=1-29"/>
</dbReference>
<dbReference type="PDB" id="7NNL">
    <property type="method" value="EM"/>
    <property type="resolution" value="3.10 A"/>
    <property type="chains" value="D=1-27"/>
</dbReference>
<dbReference type="PDB" id="7NNP">
    <property type="method" value="EM"/>
    <property type="resolution" value="3.20 A"/>
    <property type="chains" value="D=1-27"/>
</dbReference>
<dbReference type="PDB" id="7ZRD">
    <property type="method" value="EM"/>
    <property type="resolution" value="3.30 A"/>
    <property type="chains" value="D=1-29"/>
</dbReference>
<dbReference type="PDB" id="7ZRE">
    <property type="method" value="EM"/>
    <property type="resolution" value="3.40 A"/>
    <property type="chains" value="D=1-27"/>
</dbReference>
<dbReference type="PDB" id="7ZRG">
    <property type="method" value="EM"/>
    <property type="resolution" value="3.50 A"/>
    <property type="chains" value="D=1-27"/>
</dbReference>
<dbReference type="PDB" id="7ZRH">
    <property type="method" value="EM"/>
    <property type="resolution" value="3.40 A"/>
    <property type="chains" value="D=1-27"/>
</dbReference>
<dbReference type="PDB" id="7ZRI">
    <property type="method" value="EM"/>
    <property type="resolution" value="3.50 A"/>
    <property type="chains" value="D=1-27"/>
</dbReference>
<dbReference type="PDB" id="7ZRJ">
    <property type="method" value="EM"/>
    <property type="resolution" value="3.70 A"/>
    <property type="chains" value="D=1-27"/>
</dbReference>
<dbReference type="PDB" id="7ZRK">
    <property type="method" value="EM"/>
    <property type="resolution" value="3.10 A"/>
    <property type="chains" value="D=1-27"/>
</dbReference>
<dbReference type="PDB" id="7ZRL">
    <property type="method" value="EM"/>
    <property type="resolution" value="4.00 A"/>
    <property type="chains" value="D=1-27"/>
</dbReference>
<dbReference type="PDB" id="7ZRM">
    <property type="method" value="EM"/>
    <property type="resolution" value="3.70 A"/>
    <property type="chains" value="D=1-27"/>
</dbReference>
<dbReference type="PDBsum" id="5MRW"/>
<dbReference type="PDBsum" id="6HRA"/>
<dbReference type="PDBsum" id="6HRB"/>
<dbReference type="PDBsum" id="7BGY"/>
<dbReference type="PDBsum" id="7BH1"/>
<dbReference type="PDBsum" id="7BH2"/>
<dbReference type="PDBsum" id="7LC3"/>
<dbReference type="PDBsum" id="7LC6"/>
<dbReference type="PDBsum" id="7NNL"/>
<dbReference type="PDBsum" id="7NNP"/>
<dbReference type="PDBsum" id="7ZRD"/>
<dbReference type="PDBsum" id="7ZRE"/>
<dbReference type="PDBsum" id="7ZRG"/>
<dbReference type="PDBsum" id="7ZRH"/>
<dbReference type="PDBsum" id="7ZRI"/>
<dbReference type="PDBsum" id="7ZRJ"/>
<dbReference type="PDBsum" id="7ZRK"/>
<dbReference type="PDBsum" id="7ZRL"/>
<dbReference type="PDBsum" id="7ZRM"/>
<dbReference type="EMDB" id="EMD-0257"/>
<dbReference type="EMDB" id="EMD-0258"/>
<dbReference type="EMDB" id="EMD-12184"/>
<dbReference type="EMDB" id="EMD-12185"/>
<dbReference type="EMDB" id="EMD-12186"/>
<dbReference type="EMDB" id="EMD-12478"/>
<dbReference type="EMDB" id="EMD-12482"/>
<dbReference type="EMDB" id="EMD-14911"/>
<dbReference type="EMDB" id="EMD-14912"/>
<dbReference type="EMDB" id="EMD-14913"/>
<dbReference type="EMDB" id="EMD-14914"/>
<dbReference type="EMDB" id="EMD-14915"/>
<dbReference type="EMDB" id="EMD-14916"/>
<dbReference type="EMDB" id="EMD-14917"/>
<dbReference type="EMDB" id="EMD-14918"/>
<dbReference type="EMDB" id="EMD-14919"/>
<dbReference type="EMDB" id="EMD-23268"/>
<dbReference type="EMDB" id="EMD-23269"/>
<dbReference type="SMR" id="P36937"/>
<dbReference type="BioGRID" id="4259926">
    <property type="interactions" value="3"/>
</dbReference>
<dbReference type="ComplexPortal" id="CPX-3564">
    <property type="entry name" value="KdpFABC potassium import complex"/>
</dbReference>
<dbReference type="FunCoup" id="P36937">
    <property type="interactions" value="397"/>
</dbReference>
<dbReference type="IntAct" id="P36937">
    <property type="interactions" value="1"/>
</dbReference>
<dbReference type="STRING" id="511145.b4513"/>
<dbReference type="TCDB" id="3.A.3.7.1">
    <property type="family name" value="the p-type atpase (p-atpase) superfamily"/>
</dbReference>
<dbReference type="PaxDb" id="511145-b4513"/>
<dbReference type="EnsemblBacteria" id="ABD18643">
    <property type="protein sequence ID" value="ABD18643"/>
    <property type="gene ID" value="b4513"/>
</dbReference>
<dbReference type="GeneID" id="86945573"/>
<dbReference type="GeneID" id="948946"/>
<dbReference type="KEGG" id="ecj:JW0687"/>
<dbReference type="KEGG" id="eco:b4513"/>
<dbReference type="KEGG" id="ecoc:C3026_03490"/>
<dbReference type="PATRIC" id="fig|511145.12.peg.729"/>
<dbReference type="EchoBASE" id="EB2047"/>
<dbReference type="HOGENOM" id="CLU_202373_1_1_6"/>
<dbReference type="InParanoid" id="P36937"/>
<dbReference type="BioCyc" id="EcoCyc:MONOMER0-12"/>
<dbReference type="BioCyc" id="MetaCyc:MONOMER0-12"/>
<dbReference type="BRENDA" id="7.2.2.6">
    <property type="organism ID" value="2026"/>
</dbReference>
<dbReference type="PRO" id="PR:P36937"/>
<dbReference type="Proteomes" id="UP000000625">
    <property type="component" value="Chromosome"/>
</dbReference>
<dbReference type="GO" id="GO:0005886">
    <property type="term" value="C:plasma membrane"/>
    <property type="evidence" value="ECO:0000314"/>
    <property type="project" value="ComplexPortal"/>
</dbReference>
<dbReference type="GO" id="GO:0031004">
    <property type="term" value="C:potassium ion-transporting ATPase complex"/>
    <property type="evidence" value="ECO:0000314"/>
    <property type="project" value="EcoCyc"/>
</dbReference>
<dbReference type="GO" id="GO:1903103">
    <property type="term" value="C:potassium:proton antiporter complex"/>
    <property type="evidence" value="ECO:0000353"/>
    <property type="project" value="ComplexPortal"/>
</dbReference>
<dbReference type="GO" id="GO:0008556">
    <property type="term" value="F:P-type potassium transmembrane transporter activity"/>
    <property type="evidence" value="ECO:0000314"/>
    <property type="project" value="EcoCyc"/>
</dbReference>
<dbReference type="GO" id="GO:0098655">
    <property type="term" value="P:monoatomic cation transmembrane transport"/>
    <property type="evidence" value="ECO:0000314"/>
    <property type="project" value="EcoCyc"/>
</dbReference>
<dbReference type="GO" id="GO:0071805">
    <property type="term" value="P:potassium ion transmembrane transport"/>
    <property type="evidence" value="ECO:0000314"/>
    <property type="project" value="EcoCyc"/>
</dbReference>
<dbReference type="GO" id="GO:0006813">
    <property type="term" value="P:potassium ion transport"/>
    <property type="evidence" value="ECO:0000314"/>
    <property type="project" value="ComplexPortal"/>
</dbReference>
<dbReference type="InterPro" id="IPR011726">
    <property type="entry name" value="KdpF"/>
</dbReference>
<dbReference type="NCBIfam" id="TIGR02115">
    <property type="entry name" value="potass_kdpF"/>
    <property type="match status" value="1"/>
</dbReference>
<dbReference type="NCBIfam" id="NF011332">
    <property type="entry name" value="PRK14748.1"/>
    <property type="match status" value="1"/>
</dbReference>
<dbReference type="Pfam" id="PF09604">
    <property type="entry name" value="Potass_KdpF"/>
    <property type="match status" value="1"/>
</dbReference>
<feature type="chain" id="PRO_0000084299" description="Potassium-transporting ATPase KdpF subunit">
    <location>
        <begin position="1"/>
        <end position="29"/>
    </location>
</feature>
<feature type="topological domain" description="Periplasmic" evidence="5 6">
    <location>
        <begin position="1"/>
        <end position="2"/>
    </location>
</feature>
<feature type="transmembrane region" description="Helical" evidence="5 6 9 10">
    <location>
        <begin position="3"/>
        <end position="24"/>
    </location>
</feature>
<feature type="topological domain" description="Cytoplasmic" evidence="5 6">
    <location>
        <begin position="25"/>
        <end position="29"/>
    </location>
</feature>
<feature type="helix" evidence="17">
    <location>
        <begin position="3"/>
        <end position="24"/>
    </location>
</feature>
<feature type="turn" evidence="18">
    <location>
        <begin position="25"/>
        <end position="28"/>
    </location>
</feature>